<name>UPPP_MYCA1</name>
<organism>
    <name type="scientific">Mycobacterium avium (strain 104)</name>
    <dbReference type="NCBI Taxonomy" id="243243"/>
    <lineage>
        <taxon>Bacteria</taxon>
        <taxon>Bacillati</taxon>
        <taxon>Actinomycetota</taxon>
        <taxon>Actinomycetes</taxon>
        <taxon>Mycobacteriales</taxon>
        <taxon>Mycobacteriaceae</taxon>
        <taxon>Mycobacterium</taxon>
        <taxon>Mycobacterium avium complex (MAC)</taxon>
    </lineage>
</organism>
<accession>A0QGK1</accession>
<dbReference type="EC" id="3.6.1.27" evidence="1"/>
<dbReference type="EMBL" id="CP000479">
    <property type="protein sequence ID" value="ABK67949.1"/>
    <property type="molecule type" value="Genomic_DNA"/>
</dbReference>
<dbReference type="RefSeq" id="WP_011725096.1">
    <property type="nucleotide sequence ID" value="NC_008595.1"/>
</dbReference>
<dbReference type="SMR" id="A0QGK1"/>
<dbReference type="KEGG" id="mav:MAV_2853"/>
<dbReference type="HOGENOM" id="CLU_060296_1_1_11"/>
<dbReference type="Proteomes" id="UP000001574">
    <property type="component" value="Chromosome"/>
</dbReference>
<dbReference type="GO" id="GO:0005886">
    <property type="term" value="C:plasma membrane"/>
    <property type="evidence" value="ECO:0007669"/>
    <property type="project" value="UniProtKB-SubCell"/>
</dbReference>
<dbReference type="GO" id="GO:0050380">
    <property type="term" value="F:undecaprenyl-diphosphatase activity"/>
    <property type="evidence" value="ECO:0007669"/>
    <property type="project" value="UniProtKB-UniRule"/>
</dbReference>
<dbReference type="GO" id="GO:0071555">
    <property type="term" value="P:cell wall organization"/>
    <property type="evidence" value="ECO:0007669"/>
    <property type="project" value="UniProtKB-KW"/>
</dbReference>
<dbReference type="GO" id="GO:0009252">
    <property type="term" value="P:peptidoglycan biosynthetic process"/>
    <property type="evidence" value="ECO:0007669"/>
    <property type="project" value="UniProtKB-KW"/>
</dbReference>
<dbReference type="GO" id="GO:0008360">
    <property type="term" value="P:regulation of cell shape"/>
    <property type="evidence" value="ECO:0007669"/>
    <property type="project" value="UniProtKB-KW"/>
</dbReference>
<dbReference type="GO" id="GO:0046677">
    <property type="term" value="P:response to antibiotic"/>
    <property type="evidence" value="ECO:0007669"/>
    <property type="project" value="UniProtKB-UniRule"/>
</dbReference>
<dbReference type="HAMAP" id="MF_01006">
    <property type="entry name" value="Undec_diphosphatase"/>
    <property type="match status" value="1"/>
</dbReference>
<dbReference type="InterPro" id="IPR003824">
    <property type="entry name" value="UppP"/>
</dbReference>
<dbReference type="NCBIfam" id="NF001395">
    <property type="entry name" value="PRK00281.3-1"/>
    <property type="match status" value="1"/>
</dbReference>
<dbReference type="PANTHER" id="PTHR30622">
    <property type="entry name" value="UNDECAPRENYL-DIPHOSPHATASE"/>
    <property type="match status" value="1"/>
</dbReference>
<dbReference type="PANTHER" id="PTHR30622:SF4">
    <property type="entry name" value="UNDECAPRENYL-DIPHOSPHATASE"/>
    <property type="match status" value="1"/>
</dbReference>
<dbReference type="Pfam" id="PF02673">
    <property type="entry name" value="BacA"/>
    <property type="match status" value="1"/>
</dbReference>
<gene>
    <name evidence="1" type="primary">uppP</name>
    <name type="ordered locus">MAV_2853</name>
</gene>
<sequence length="305" mass="32570">MTAQLSYVEAVVVGAFQGVTELFPVSSLGHAVLVPALVGGRWAQDLSVSAHRSPYLAFIVGLHVATAAALLVFFWRDWVRILAGFFSSLRHRRIRTPDERLAWLIVVGTIPVGLAGLALEQLFRTTLGKPVPAAAFLLLNSVALYAGEVLRRRVAPVADEPAVPDAEQQHGDEASDNRLAQLPLRRGVLIGAAQILALLPGISRSGITIVAGLWRGLSHEDAARFSFLLATPIILAAGVYKIPELFGPLGAGIGGQVLAGSIASFVCAYLAVRYLTRYFQTRTLTPFAIYCAVAGGASLVWLALR</sequence>
<keyword id="KW-0046">Antibiotic resistance</keyword>
<keyword id="KW-1003">Cell membrane</keyword>
<keyword id="KW-0133">Cell shape</keyword>
<keyword id="KW-0961">Cell wall biogenesis/degradation</keyword>
<keyword id="KW-0378">Hydrolase</keyword>
<keyword id="KW-0472">Membrane</keyword>
<keyword id="KW-0573">Peptidoglycan synthesis</keyword>
<keyword id="KW-0812">Transmembrane</keyword>
<keyword id="KW-1133">Transmembrane helix</keyword>
<feature type="chain" id="PRO_0000290728" description="Undecaprenyl-diphosphatase">
    <location>
        <begin position="1"/>
        <end position="305"/>
    </location>
</feature>
<feature type="transmembrane region" description="Helical" evidence="1">
    <location>
        <begin position="18"/>
        <end position="38"/>
    </location>
</feature>
<feature type="transmembrane region" description="Helical" evidence="1">
    <location>
        <begin position="55"/>
        <end position="75"/>
    </location>
</feature>
<feature type="transmembrane region" description="Helical" evidence="1">
    <location>
        <begin position="103"/>
        <end position="123"/>
    </location>
</feature>
<feature type="transmembrane region" description="Helical" evidence="1">
    <location>
        <begin position="130"/>
        <end position="150"/>
    </location>
</feature>
<feature type="transmembrane region" description="Helical" evidence="1">
    <location>
        <begin position="187"/>
        <end position="207"/>
    </location>
</feature>
<feature type="transmembrane region" description="Helical" evidence="1">
    <location>
        <begin position="225"/>
        <end position="245"/>
    </location>
</feature>
<feature type="transmembrane region" description="Helical" evidence="1">
    <location>
        <begin position="246"/>
        <end position="266"/>
    </location>
</feature>
<feature type="transmembrane region" description="Helical" evidence="1">
    <location>
        <begin position="284"/>
        <end position="304"/>
    </location>
</feature>
<reference key="1">
    <citation type="submission" date="2006-10" db="EMBL/GenBank/DDBJ databases">
        <authorList>
            <person name="Fleischmann R.D."/>
            <person name="Dodson R.J."/>
            <person name="Haft D.H."/>
            <person name="Merkel J.S."/>
            <person name="Nelson W.C."/>
            <person name="Fraser C.M."/>
        </authorList>
    </citation>
    <scope>NUCLEOTIDE SEQUENCE [LARGE SCALE GENOMIC DNA]</scope>
    <source>
        <strain>104</strain>
    </source>
</reference>
<comment type="function">
    <text evidence="1">Catalyzes the dephosphorylation of undecaprenyl diphosphate (UPP). Confers resistance to bacitracin.</text>
</comment>
<comment type="catalytic activity">
    <reaction evidence="1">
        <text>di-trans,octa-cis-undecaprenyl diphosphate + H2O = di-trans,octa-cis-undecaprenyl phosphate + phosphate + H(+)</text>
        <dbReference type="Rhea" id="RHEA:28094"/>
        <dbReference type="ChEBI" id="CHEBI:15377"/>
        <dbReference type="ChEBI" id="CHEBI:15378"/>
        <dbReference type="ChEBI" id="CHEBI:43474"/>
        <dbReference type="ChEBI" id="CHEBI:58405"/>
        <dbReference type="ChEBI" id="CHEBI:60392"/>
        <dbReference type="EC" id="3.6.1.27"/>
    </reaction>
</comment>
<comment type="subcellular location">
    <subcellularLocation>
        <location evidence="1">Cell membrane</location>
        <topology evidence="1">Multi-pass membrane protein</topology>
    </subcellularLocation>
</comment>
<comment type="miscellaneous">
    <text>Bacitracin is thought to be involved in the inhibition of peptidoglycan synthesis by sequestering undecaprenyl diphosphate, thereby reducing the pool of lipid carrier available.</text>
</comment>
<comment type="similarity">
    <text evidence="1">Belongs to the UppP family.</text>
</comment>
<proteinExistence type="inferred from homology"/>
<protein>
    <recommendedName>
        <fullName evidence="1">Undecaprenyl-diphosphatase</fullName>
        <ecNumber evidence="1">3.6.1.27</ecNumber>
    </recommendedName>
    <alternativeName>
        <fullName evidence="1">Bacitracin resistance protein</fullName>
    </alternativeName>
    <alternativeName>
        <fullName evidence="1">Undecaprenyl pyrophosphate phosphatase</fullName>
    </alternativeName>
</protein>
<evidence type="ECO:0000255" key="1">
    <source>
        <dbReference type="HAMAP-Rule" id="MF_01006"/>
    </source>
</evidence>